<proteinExistence type="inferred from homology"/>
<gene>
    <name evidence="1" type="primary">atpF</name>
    <name type="ordered locus">SPH_1623</name>
</gene>
<sequence>MHVTVGELIGNFILITGSFILLLVLIKKFAWSNITGIFEERAEKIASDIDRAEEARQKAEVLAQKREDELAGSRKEAKTIIENAKETAEQSKANILADAKLEAGHLKEKANQEIAQNKVEALQSVKGEVADLTISLAGKIISQNLDSHAHKALIDQYIDQLGEA</sequence>
<accession>B1ICT3</accession>
<evidence type="ECO:0000255" key="1">
    <source>
        <dbReference type="HAMAP-Rule" id="MF_01398"/>
    </source>
</evidence>
<feature type="chain" id="PRO_0000368798" description="ATP synthase subunit b">
    <location>
        <begin position="1"/>
        <end position="164"/>
    </location>
</feature>
<feature type="transmembrane region" description="Helical" evidence="1">
    <location>
        <begin position="6"/>
        <end position="26"/>
    </location>
</feature>
<keyword id="KW-0066">ATP synthesis</keyword>
<keyword id="KW-1003">Cell membrane</keyword>
<keyword id="KW-0138">CF(0)</keyword>
<keyword id="KW-0375">Hydrogen ion transport</keyword>
<keyword id="KW-0406">Ion transport</keyword>
<keyword id="KW-0472">Membrane</keyword>
<keyword id="KW-0812">Transmembrane</keyword>
<keyword id="KW-1133">Transmembrane helix</keyword>
<keyword id="KW-0813">Transport</keyword>
<organism>
    <name type="scientific">Streptococcus pneumoniae (strain Hungary19A-6)</name>
    <dbReference type="NCBI Taxonomy" id="487214"/>
    <lineage>
        <taxon>Bacteria</taxon>
        <taxon>Bacillati</taxon>
        <taxon>Bacillota</taxon>
        <taxon>Bacilli</taxon>
        <taxon>Lactobacillales</taxon>
        <taxon>Streptococcaceae</taxon>
        <taxon>Streptococcus</taxon>
    </lineage>
</organism>
<protein>
    <recommendedName>
        <fullName evidence="1">ATP synthase subunit b</fullName>
    </recommendedName>
    <alternativeName>
        <fullName evidence="1">ATP synthase F(0) sector subunit b</fullName>
    </alternativeName>
    <alternativeName>
        <fullName evidence="1">ATPase subunit I</fullName>
    </alternativeName>
    <alternativeName>
        <fullName evidence="1">F-type ATPase subunit b</fullName>
        <shortName evidence="1">F-ATPase subunit b</shortName>
    </alternativeName>
</protein>
<dbReference type="EMBL" id="CP000936">
    <property type="protein sequence ID" value="ACA35605.1"/>
    <property type="molecule type" value="Genomic_DNA"/>
</dbReference>
<dbReference type="RefSeq" id="WP_000558554.1">
    <property type="nucleotide sequence ID" value="NC_010380.1"/>
</dbReference>
<dbReference type="SMR" id="B1ICT3"/>
<dbReference type="GeneID" id="45653249"/>
<dbReference type="KEGG" id="spv:SPH_1623"/>
<dbReference type="HOGENOM" id="CLU_079215_4_2_9"/>
<dbReference type="Proteomes" id="UP000002163">
    <property type="component" value="Chromosome"/>
</dbReference>
<dbReference type="GO" id="GO:0005886">
    <property type="term" value="C:plasma membrane"/>
    <property type="evidence" value="ECO:0007669"/>
    <property type="project" value="UniProtKB-SubCell"/>
</dbReference>
<dbReference type="GO" id="GO:0045259">
    <property type="term" value="C:proton-transporting ATP synthase complex"/>
    <property type="evidence" value="ECO:0007669"/>
    <property type="project" value="UniProtKB-KW"/>
</dbReference>
<dbReference type="GO" id="GO:0046933">
    <property type="term" value="F:proton-transporting ATP synthase activity, rotational mechanism"/>
    <property type="evidence" value="ECO:0007669"/>
    <property type="project" value="UniProtKB-UniRule"/>
</dbReference>
<dbReference type="GO" id="GO:0046961">
    <property type="term" value="F:proton-transporting ATPase activity, rotational mechanism"/>
    <property type="evidence" value="ECO:0007669"/>
    <property type="project" value="TreeGrafter"/>
</dbReference>
<dbReference type="CDD" id="cd06503">
    <property type="entry name" value="ATP-synt_Fo_b"/>
    <property type="match status" value="1"/>
</dbReference>
<dbReference type="Gene3D" id="6.10.250.1580">
    <property type="match status" value="1"/>
</dbReference>
<dbReference type="HAMAP" id="MF_01398">
    <property type="entry name" value="ATP_synth_b_bprime"/>
    <property type="match status" value="1"/>
</dbReference>
<dbReference type="InterPro" id="IPR028987">
    <property type="entry name" value="ATP_synth_B-like_membr_sf"/>
</dbReference>
<dbReference type="InterPro" id="IPR002146">
    <property type="entry name" value="ATP_synth_b/b'su_bac/chlpt"/>
</dbReference>
<dbReference type="InterPro" id="IPR005864">
    <property type="entry name" value="ATP_synth_F0_bsu_bac"/>
</dbReference>
<dbReference type="InterPro" id="IPR050059">
    <property type="entry name" value="ATP_synthase_B_chain"/>
</dbReference>
<dbReference type="NCBIfam" id="TIGR01144">
    <property type="entry name" value="ATP_synt_b"/>
    <property type="match status" value="1"/>
</dbReference>
<dbReference type="PANTHER" id="PTHR33445:SF1">
    <property type="entry name" value="ATP SYNTHASE SUBUNIT B"/>
    <property type="match status" value="1"/>
</dbReference>
<dbReference type="PANTHER" id="PTHR33445">
    <property type="entry name" value="ATP SYNTHASE SUBUNIT B', CHLOROPLASTIC"/>
    <property type="match status" value="1"/>
</dbReference>
<dbReference type="Pfam" id="PF00430">
    <property type="entry name" value="ATP-synt_B"/>
    <property type="match status" value="1"/>
</dbReference>
<dbReference type="SUPFAM" id="SSF81573">
    <property type="entry name" value="F1F0 ATP synthase subunit B, membrane domain"/>
    <property type="match status" value="1"/>
</dbReference>
<name>ATPF_STRPI</name>
<comment type="function">
    <text evidence="1">F(1)F(0) ATP synthase produces ATP from ADP in the presence of a proton or sodium gradient. F-type ATPases consist of two structural domains, F(1) containing the extramembraneous catalytic core and F(0) containing the membrane proton channel, linked together by a central stalk and a peripheral stalk. During catalysis, ATP synthesis in the catalytic domain of F(1) is coupled via a rotary mechanism of the central stalk subunits to proton translocation.</text>
</comment>
<comment type="function">
    <text evidence="1">Component of the F(0) channel, it forms part of the peripheral stalk, linking F(1) to F(0).</text>
</comment>
<comment type="subunit">
    <text evidence="1">F-type ATPases have 2 components, F(1) - the catalytic core - and F(0) - the membrane proton channel. F(1) has five subunits: alpha(3), beta(3), gamma(1), delta(1), epsilon(1). F(0) has three main subunits: a(1), b(2) and c(10-14). The alpha and beta chains form an alternating ring which encloses part of the gamma chain. F(1) is attached to F(0) by a central stalk formed by the gamma and epsilon chains, while a peripheral stalk is formed by the delta and b chains.</text>
</comment>
<comment type="subcellular location">
    <subcellularLocation>
        <location evidence="1">Cell membrane</location>
        <topology evidence="1">Single-pass membrane protein</topology>
    </subcellularLocation>
</comment>
<comment type="similarity">
    <text evidence="1">Belongs to the ATPase B chain family.</text>
</comment>
<reference key="1">
    <citation type="journal article" date="2010" name="Genome Biol.">
        <title>Structure and dynamics of the pan-genome of Streptococcus pneumoniae and closely related species.</title>
        <authorList>
            <person name="Donati C."/>
            <person name="Hiller N.L."/>
            <person name="Tettelin H."/>
            <person name="Muzzi A."/>
            <person name="Croucher N.J."/>
            <person name="Angiuoli S.V."/>
            <person name="Oggioni M."/>
            <person name="Dunning Hotopp J.C."/>
            <person name="Hu F.Z."/>
            <person name="Riley D.R."/>
            <person name="Covacci A."/>
            <person name="Mitchell T.J."/>
            <person name="Bentley S.D."/>
            <person name="Kilian M."/>
            <person name="Ehrlich G.D."/>
            <person name="Rappuoli R."/>
            <person name="Moxon E.R."/>
            <person name="Masignani V."/>
        </authorList>
    </citation>
    <scope>NUCLEOTIDE SEQUENCE [LARGE SCALE GENOMIC DNA]</scope>
    <source>
        <strain>Hungary19A-6</strain>
    </source>
</reference>